<dbReference type="EC" id="6.5.1.2" evidence="1"/>
<dbReference type="EMBL" id="CP000937">
    <property type="protein sequence ID" value="ABZ87563.1"/>
    <property type="molecule type" value="Genomic_DNA"/>
</dbReference>
<dbReference type="SMR" id="B0TY02"/>
<dbReference type="KEGG" id="fph:Fphi_1338"/>
<dbReference type="eggNOG" id="COG0272">
    <property type="taxonomic scope" value="Bacteria"/>
</dbReference>
<dbReference type="HOGENOM" id="CLU_007764_2_1_6"/>
<dbReference type="GO" id="GO:0003677">
    <property type="term" value="F:DNA binding"/>
    <property type="evidence" value="ECO:0007669"/>
    <property type="project" value="InterPro"/>
</dbReference>
<dbReference type="GO" id="GO:0003911">
    <property type="term" value="F:DNA ligase (NAD+) activity"/>
    <property type="evidence" value="ECO:0007669"/>
    <property type="project" value="UniProtKB-UniRule"/>
</dbReference>
<dbReference type="GO" id="GO:0046872">
    <property type="term" value="F:metal ion binding"/>
    <property type="evidence" value="ECO:0007669"/>
    <property type="project" value="UniProtKB-KW"/>
</dbReference>
<dbReference type="GO" id="GO:0006281">
    <property type="term" value="P:DNA repair"/>
    <property type="evidence" value="ECO:0007669"/>
    <property type="project" value="UniProtKB-KW"/>
</dbReference>
<dbReference type="GO" id="GO:0006260">
    <property type="term" value="P:DNA replication"/>
    <property type="evidence" value="ECO:0007669"/>
    <property type="project" value="UniProtKB-KW"/>
</dbReference>
<dbReference type="CDD" id="cd17748">
    <property type="entry name" value="BRCT_DNA_ligase_like"/>
    <property type="match status" value="1"/>
</dbReference>
<dbReference type="CDD" id="cd00114">
    <property type="entry name" value="LIGANc"/>
    <property type="match status" value="1"/>
</dbReference>
<dbReference type="FunFam" id="1.10.150.20:FF:000007">
    <property type="entry name" value="DNA ligase"/>
    <property type="match status" value="1"/>
</dbReference>
<dbReference type="FunFam" id="2.40.50.140:FF:000012">
    <property type="entry name" value="DNA ligase"/>
    <property type="match status" value="1"/>
</dbReference>
<dbReference type="FunFam" id="3.30.470.30:FF:000001">
    <property type="entry name" value="DNA ligase"/>
    <property type="match status" value="1"/>
</dbReference>
<dbReference type="Gene3D" id="6.20.10.30">
    <property type="match status" value="1"/>
</dbReference>
<dbReference type="Gene3D" id="1.10.150.20">
    <property type="entry name" value="5' to 3' exonuclease, C-terminal subdomain"/>
    <property type="match status" value="2"/>
</dbReference>
<dbReference type="Gene3D" id="3.40.50.10190">
    <property type="entry name" value="BRCT domain"/>
    <property type="match status" value="1"/>
</dbReference>
<dbReference type="Gene3D" id="3.30.470.30">
    <property type="entry name" value="DNA ligase/mRNA capping enzyme"/>
    <property type="match status" value="1"/>
</dbReference>
<dbReference type="Gene3D" id="1.10.287.610">
    <property type="entry name" value="Helix hairpin bin"/>
    <property type="match status" value="1"/>
</dbReference>
<dbReference type="Gene3D" id="2.40.50.140">
    <property type="entry name" value="Nucleic acid-binding proteins"/>
    <property type="match status" value="1"/>
</dbReference>
<dbReference type="HAMAP" id="MF_01588">
    <property type="entry name" value="DNA_ligase_A"/>
    <property type="match status" value="1"/>
</dbReference>
<dbReference type="InterPro" id="IPR001357">
    <property type="entry name" value="BRCT_dom"/>
</dbReference>
<dbReference type="InterPro" id="IPR036420">
    <property type="entry name" value="BRCT_dom_sf"/>
</dbReference>
<dbReference type="InterPro" id="IPR041663">
    <property type="entry name" value="DisA/LigA_HHH"/>
</dbReference>
<dbReference type="InterPro" id="IPR001679">
    <property type="entry name" value="DNA_ligase"/>
</dbReference>
<dbReference type="InterPro" id="IPR033136">
    <property type="entry name" value="DNA_ligase_CS"/>
</dbReference>
<dbReference type="InterPro" id="IPR013839">
    <property type="entry name" value="DNAligase_adenylation"/>
</dbReference>
<dbReference type="InterPro" id="IPR013840">
    <property type="entry name" value="DNAligase_N"/>
</dbReference>
<dbReference type="InterPro" id="IPR003583">
    <property type="entry name" value="Hlx-hairpin-Hlx_DNA-bd_motif"/>
</dbReference>
<dbReference type="InterPro" id="IPR012340">
    <property type="entry name" value="NA-bd_OB-fold"/>
</dbReference>
<dbReference type="InterPro" id="IPR004150">
    <property type="entry name" value="NAD_DNA_ligase_OB"/>
</dbReference>
<dbReference type="InterPro" id="IPR010994">
    <property type="entry name" value="RuvA_2-like"/>
</dbReference>
<dbReference type="InterPro" id="IPR004149">
    <property type="entry name" value="Znf_DNAligase_C4"/>
</dbReference>
<dbReference type="NCBIfam" id="TIGR00575">
    <property type="entry name" value="dnlj"/>
    <property type="match status" value="1"/>
</dbReference>
<dbReference type="NCBIfam" id="NF005932">
    <property type="entry name" value="PRK07956.1"/>
    <property type="match status" value="1"/>
</dbReference>
<dbReference type="PANTHER" id="PTHR23389">
    <property type="entry name" value="CHROMOSOME TRANSMISSION FIDELITY FACTOR 18"/>
    <property type="match status" value="1"/>
</dbReference>
<dbReference type="PANTHER" id="PTHR23389:SF9">
    <property type="entry name" value="DNA LIGASE"/>
    <property type="match status" value="1"/>
</dbReference>
<dbReference type="Pfam" id="PF00533">
    <property type="entry name" value="BRCT"/>
    <property type="match status" value="1"/>
</dbReference>
<dbReference type="Pfam" id="PF01653">
    <property type="entry name" value="DNA_ligase_aden"/>
    <property type="match status" value="1"/>
</dbReference>
<dbReference type="Pfam" id="PF03120">
    <property type="entry name" value="DNA_ligase_OB"/>
    <property type="match status" value="1"/>
</dbReference>
<dbReference type="Pfam" id="PF03119">
    <property type="entry name" value="DNA_ligase_ZBD"/>
    <property type="match status" value="1"/>
</dbReference>
<dbReference type="Pfam" id="PF12826">
    <property type="entry name" value="HHH_2"/>
    <property type="match status" value="1"/>
</dbReference>
<dbReference type="PIRSF" id="PIRSF001604">
    <property type="entry name" value="LigA"/>
    <property type="match status" value="1"/>
</dbReference>
<dbReference type="SMART" id="SM00292">
    <property type="entry name" value="BRCT"/>
    <property type="match status" value="1"/>
</dbReference>
<dbReference type="SMART" id="SM00278">
    <property type="entry name" value="HhH1"/>
    <property type="match status" value="4"/>
</dbReference>
<dbReference type="SMART" id="SM00532">
    <property type="entry name" value="LIGANc"/>
    <property type="match status" value="1"/>
</dbReference>
<dbReference type="SUPFAM" id="SSF52113">
    <property type="entry name" value="BRCT domain"/>
    <property type="match status" value="1"/>
</dbReference>
<dbReference type="SUPFAM" id="SSF56091">
    <property type="entry name" value="DNA ligase/mRNA capping enzyme, catalytic domain"/>
    <property type="match status" value="1"/>
</dbReference>
<dbReference type="SUPFAM" id="SSF50249">
    <property type="entry name" value="Nucleic acid-binding proteins"/>
    <property type="match status" value="1"/>
</dbReference>
<dbReference type="SUPFAM" id="SSF47781">
    <property type="entry name" value="RuvA domain 2-like"/>
    <property type="match status" value="1"/>
</dbReference>
<dbReference type="PROSITE" id="PS50172">
    <property type="entry name" value="BRCT"/>
    <property type="match status" value="1"/>
</dbReference>
<dbReference type="PROSITE" id="PS01056">
    <property type="entry name" value="DNA_LIGASE_N2"/>
    <property type="match status" value="1"/>
</dbReference>
<protein>
    <recommendedName>
        <fullName evidence="1">DNA ligase</fullName>
        <ecNumber evidence="1">6.5.1.2</ecNumber>
    </recommendedName>
    <alternativeName>
        <fullName evidence="1">Polydeoxyribonucleotide synthase [NAD(+)]</fullName>
    </alternativeName>
</protein>
<name>DNLJ_FRAP2</name>
<comment type="function">
    <text evidence="1">DNA ligase that catalyzes the formation of phosphodiester linkages between 5'-phosphoryl and 3'-hydroxyl groups in double-stranded DNA using NAD as a coenzyme and as the energy source for the reaction. It is essential for DNA replication and repair of damaged DNA.</text>
</comment>
<comment type="catalytic activity">
    <reaction evidence="1">
        <text>NAD(+) + (deoxyribonucleotide)n-3'-hydroxyl + 5'-phospho-(deoxyribonucleotide)m = (deoxyribonucleotide)n+m + AMP + beta-nicotinamide D-nucleotide.</text>
        <dbReference type="EC" id="6.5.1.2"/>
    </reaction>
</comment>
<comment type="cofactor">
    <cofactor evidence="1">
        <name>Mg(2+)</name>
        <dbReference type="ChEBI" id="CHEBI:18420"/>
    </cofactor>
    <cofactor evidence="1">
        <name>Mn(2+)</name>
        <dbReference type="ChEBI" id="CHEBI:29035"/>
    </cofactor>
</comment>
<comment type="similarity">
    <text evidence="1">Belongs to the NAD-dependent DNA ligase family. LigA subfamily.</text>
</comment>
<organism>
    <name type="scientific">Francisella philomiragia subsp. philomiragia (strain ATCC 25017 / CCUG 19701 / FSC 153 / O#319-036)</name>
    <dbReference type="NCBI Taxonomy" id="484022"/>
    <lineage>
        <taxon>Bacteria</taxon>
        <taxon>Pseudomonadati</taxon>
        <taxon>Pseudomonadota</taxon>
        <taxon>Gammaproteobacteria</taxon>
        <taxon>Thiotrichales</taxon>
        <taxon>Francisellaceae</taxon>
        <taxon>Francisella</taxon>
    </lineage>
</organism>
<evidence type="ECO:0000255" key="1">
    <source>
        <dbReference type="HAMAP-Rule" id="MF_01588"/>
    </source>
</evidence>
<sequence>MTPSDFISIDYKTLTKAQLKSYIDDLAEYLGEQSYLYHTIDKPVITDSDYDKLFRLLQDLVDDNPQLKPSNSVLDRVGGEILAGFETIKHKKKMTSLANVFSLEELRDFYDKIEYDIELECEPKMDGLAISIFYKNGKFDYAVTRGDGIQGEKVSENVKTIRNVPLKLNTSNPPEELEVRGEIILDKQSFLSLNEYMQTHENKTFANPRNAAAGSIRMLDSKVVAKRPLKLYSYGIGYFSKDFVHPETQFELMNLLQSFGFTISDNMFLAKNFSEVEVYHHKMSHQRADLAYDIDGLVFKVNNIKLQDTIGYTARGPKWAIAYKFPAEEVESEVLNVEFQVGRTGAITPVARLKPVAVGGVIVSNATLHNINEIKRKDIRVGDRVIVRRAGDVIPEVVKSLPQYRKPDAQMVEMPTNCPVCDSAIENINDQAIYRCTGGWHCQAQTTERLKHFVSRKAMDIDKLGAKLIEQLVAADLIKYPADIYKLNFEQLTGLERMGAKSSQNVLDSITKSKEPSLARFIFAIGIKDVGEVSSEALANHFGSLESFREAKFEQLIEINDIGEIIAKNIVSFWQDSLNIQIVDELLGNSINIQNPEKIEQAHNESFTNKTIVITGTFENYNRTELTQLLKSMGAKVTSSVSKKTDMVICGDNAGSKLTKAQDLGVEVIFEEDLQNLL</sequence>
<feature type="chain" id="PRO_0000340352" description="DNA ligase">
    <location>
        <begin position="1"/>
        <end position="678"/>
    </location>
</feature>
<feature type="domain" description="BRCT" evidence="1">
    <location>
        <begin position="602"/>
        <end position="678"/>
    </location>
</feature>
<feature type="active site" description="N6-AMP-lysine intermediate" evidence="1">
    <location>
        <position position="124"/>
    </location>
</feature>
<feature type="binding site" evidence="1">
    <location>
        <begin position="47"/>
        <end position="51"/>
    </location>
    <ligand>
        <name>NAD(+)</name>
        <dbReference type="ChEBI" id="CHEBI:57540"/>
    </ligand>
</feature>
<feature type="binding site" evidence="1">
    <location>
        <begin position="96"/>
        <end position="97"/>
    </location>
    <ligand>
        <name>NAD(+)</name>
        <dbReference type="ChEBI" id="CHEBI:57540"/>
    </ligand>
</feature>
<feature type="binding site" evidence="1">
    <location>
        <position position="122"/>
    </location>
    <ligand>
        <name>NAD(+)</name>
        <dbReference type="ChEBI" id="CHEBI:57540"/>
    </ligand>
</feature>
<feature type="binding site" evidence="1">
    <location>
        <position position="145"/>
    </location>
    <ligand>
        <name>NAD(+)</name>
        <dbReference type="ChEBI" id="CHEBI:57540"/>
    </ligand>
</feature>
<feature type="binding site" evidence="1">
    <location>
        <position position="182"/>
    </location>
    <ligand>
        <name>NAD(+)</name>
        <dbReference type="ChEBI" id="CHEBI:57540"/>
    </ligand>
</feature>
<feature type="binding site" evidence="1">
    <location>
        <position position="300"/>
    </location>
    <ligand>
        <name>NAD(+)</name>
        <dbReference type="ChEBI" id="CHEBI:57540"/>
    </ligand>
</feature>
<feature type="binding site" evidence="1">
    <location>
        <position position="324"/>
    </location>
    <ligand>
        <name>NAD(+)</name>
        <dbReference type="ChEBI" id="CHEBI:57540"/>
    </ligand>
</feature>
<feature type="binding site" evidence="1">
    <location>
        <position position="418"/>
    </location>
    <ligand>
        <name>Zn(2+)</name>
        <dbReference type="ChEBI" id="CHEBI:29105"/>
    </ligand>
</feature>
<feature type="binding site" evidence="1">
    <location>
        <position position="421"/>
    </location>
    <ligand>
        <name>Zn(2+)</name>
        <dbReference type="ChEBI" id="CHEBI:29105"/>
    </ligand>
</feature>
<feature type="binding site" evidence="1">
    <location>
        <position position="436"/>
    </location>
    <ligand>
        <name>Zn(2+)</name>
        <dbReference type="ChEBI" id="CHEBI:29105"/>
    </ligand>
</feature>
<feature type="binding site" evidence="1">
    <location>
        <position position="442"/>
    </location>
    <ligand>
        <name>Zn(2+)</name>
        <dbReference type="ChEBI" id="CHEBI:29105"/>
    </ligand>
</feature>
<keyword id="KW-0227">DNA damage</keyword>
<keyword id="KW-0234">DNA repair</keyword>
<keyword id="KW-0235">DNA replication</keyword>
<keyword id="KW-0436">Ligase</keyword>
<keyword id="KW-0460">Magnesium</keyword>
<keyword id="KW-0464">Manganese</keyword>
<keyword id="KW-0479">Metal-binding</keyword>
<keyword id="KW-0520">NAD</keyword>
<keyword id="KW-0862">Zinc</keyword>
<gene>
    <name evidence="1" type="primary">ligA</name>
    <name type="ordered locus">Fphi_1338</name>
</gene>
<proteinExistence type="inferred from homology"/>
<accession>B0TY02</accession>
<reference key="1">
    <citation type="submission" date="2007-12" db="EMBL/GenBank/DDBJ databases">
        <title>Complete sequence of chromosome of Francisella philomiragia subsp. philomiragia ATCC 25017.</title>
        <authorList>
            <consortium name="US DOE Joint Genome Institute"/>
            <person name="Copeland A."/>
            <person name="Lucas S."/>
            <person name="Lapidus A."/>
            <person name="Barry K."/>
            <person name="Detter J.C."/>
            <person name="Glavina del Rio T."/>
            <person name="Hammon N."/>
            <person name="Israni S."/>
            <person name="Dalin E."/>
            <person name="Tice H."/>
            <person name="Pitluck S."/>
            <person name="Chain P."/>
            <person name="Malfatti S."/>
            <person name="Shin M."/>
            <person name="Vergez L."/>
            <person name="Schmutz J."/>
            <person name="Larimer F."/>
            <person name="Land M."/>
            <person name="Hauser L."/>
            <person name="Richardson P."/>
        </authorList>
    </citation>
    <scope>NUCLEOTIDE SEQUENCE [LARGE SCALE GENOMIC DNA]</scope>
    <source>
        <strain>ATCC 25017 / CCUG 19701 / FSC 153 / O#319-036</strain>
    </source>
</reference>